<feature type="chain" id="PRO_0000296418" description="Large ribosomal subunit protein bL32">
    <location>
        <begin position="1"/>
        <end position="57"/>
    </location>
</feature>
<feature type="region of interest" description="Disordered" evidence="2">
    <location>
        <begin position="1"/>
        <end position="23"/>
    </location>
</feature>
<organism>
    <name type="scientific">Trichormus variabilis (strain ATCC 29413 / PCC 7937)</name>
    <name type="common">Anabaena variabilis</name>
    <dbReference type="NCBI Taxonomy" id="240292"/>
    <lineage>
        <taxon>Bacteria</taxon>
        <taxon>Bacillati</taxon>
        <taxon>Cyanobacteriota</taxon>
        <taxon>Cyanophyceae</taxon>
        <taxon>Nostocales</taxon>
        <taxon>Nostocaceae</taxon>
        <taxon>Trichormus</taxon>
    </lineage>
</organism>
<gene>
    <name evidence="1" type="primary">rpmF</name>
    <name evidence="1" type="synonym">rpl32</name>
    <name type="ordered locus">Ava_3613</name>
</gene>
<comment type="similarity">
    <text evidence="1">Belongs to the bacterial ribosomal protein bL32 family.</text>
</comment>
<protein>
    <recommendedName>
        <fullName evidence="1">Large ribosomal subunit protein bL32</fullName>
    </recommendedName>
    <alternativeName>
        <fullName evidence="3">50S ribosomal protein L32</fullName>
    </alternativeName>
</protein>
<dbReference type="EMBL" id="CP000117">
    <property type="protein sequence ID" value="ABA23219.1"/>
    <property type="molecule type" value="Genomic_DNA"/>
</dbReference>
<dbReference type="RefSeq" id="WP_011320324.1">
    <property type="nucleotide sequence ID" value="NC_007413.1"/>
</dbReference>
<dbReference type="SMR" id="Q3M717"/>
<dbReference type="STRING" id="240292.Ava_3613"/>
<dbReference type="GeneID" id="58726411"/>
<dbReference type="KEGG" id="ava:Ava_3613"/>
<dbReference type="eggNOG" id="COG0333">
    <property type="taxonomic scope" value="Bacteria"/>
</dbReference>
<dbReference type="HOGENOM" id="CLU_199882_0_0_3"/>
<dbReference type="Proteomes" id="UP000002533">
    <property type="component" value="Chromosome"/>
</dbReference>
<dbReference type="GO" id="GO:0015934">
    <property type="term" value="C:large ribosomal subunit"/>
    <property type="evidence" value="ECO:0007669"/>
    <property type="project" value="InterPro"/>
</dbReference>
<dbReference type="GO" id="GO:0003735">
    <property type="term" value="F:structural constituent of ribosome"/>
    <property type="evidence" value="ECO:0007669"/>
    <property type="project" value="InterPro"/>
</dbReference>
<dbReference type="GO" id="GO:0006412">
    <property type="term" value="P:translation"/>
    <property type="evidence" value="ECO:0007669"/>
    <property type="project" value="UniProtKB-UniRule"/>
</dbReference>
<dbReference type="Gene3D" id="1.20.5.640">
    <property type="entry name" value="Single helix bin"/>
    <property type="match status" value="1"/>
</dbReference>
<dbReference type="HAMAP" id="MF_00340">
    <property type="entry name" value="Ribosomal_bL32"/>
    <property type="match status" value="1"/>
</dbReference>
<dbReference type="InterPro" id="IPR002677">
    <property type="entry name" value="Ribosomal_bL32"/>
</dbReference>
<dbReference type="InterPro" id="IPR044958">
    <property type="entry name" value="Ribosomal_bL32_plant/cyanobact"/>
</dbReference>
<dbReference type="InterPro" id="IPR011332">
    <property type="entry name" value="Ribosomal_zn-bd"/>
</dbReference>
<dbReference type="NCBIfam" id="TIGR01031">
    <property type="entry name" value="rpmF_bact"/>
    <property type="match status" value="1"/>
</dbReference>
<dbReference type="PANTHER" id="PTHR36083">
    <property type="entry name" value="50S RIBOSOMAL PROTEIN L32, CHLOROPLASTIC"/>
    <property type="match status" value="1"/>
</dbReference>
<dbReference type="PANTHER" id="PTHR36083:SF1">
    <property type="entry name" value="LARGE RIBOSOMAL SUBUNIT PROTEIN BL32C"/>
    <property type="match status" value="1"/>
</dbReference>
<dbReference type="Pfam" id="PF01783">
    <property type="entry name" value="Ribosomal_L32p"/>
    <property type="match status" value="1"/>
</dbReference>
<dbReference type="SUPFAM" id="SSF57829">
    <property type="entry name" value="Zn-binding ribosomal proteins"/>
    <property type="match status" value="1"/>
</dbReference>
<evidence type="ECO:0000255" key="1">
    <source>
        <dbReference type="HAMAP-Rule" id="MF_00340"/>
    </source>
</evidence>
<evidence type="ECO:0000256" key="2">
    <source>
        <dbReference type="SAM" id="MobiDB-lite"/>
    </source>
</evidence>
<evidence type="ECO:0000305" key="3"/>
<reference key="1">
    <citation type="journal article" date="2014" name="Stand. Genomic Sci.">
        <title>Complete genome sequence of Anabaena variabilis ATCC 29413.</title>
        <authorList>
            <person name="Thiel T."/>
            <person name="Pratte B.S."/>
            <person name="Zhong J."/>
            <person name="Goodwin L."/>
            <person name="Copeland A."/>
            <person name="Lucas S."/>
            <person name="Han C."/>
            <person name="Pitluck S."/>
            <person name="Land M.L."/>
            <person name="Kyrpides N.C."/>
            <person name="Woyke T."/>
        </authorList>
    </citation>
    <scope>NUCLEOTIDE SEQUENCE [LARGE SCALE GENOMIC DNA]</scope>
    <source>
        <strain>ATCC 29413 / PCC 7937</strain>
    </source>
</reference>
<keyword id="KW-0687">Ribonucleoprotein</keyword>
<keyword id="KW-0689">Ribosomal protein</keyword>
<accession>Q3M717</accession>
<name>RL32_TRIV2</name>
<sequence length="57" mass="6476">MAVPKKKTSKSKRDKRRATWRHKAAVEAQKALSLGKSILTGRSTFVYPTAEEEDEEE</sequence>
<proteinExistence type="inferred from homology"/>